<dbReference type="EC" id="6.3.2.4" evidence="2"/>
<dbReference type="EMBL" id="CP000781">
    <property type="protein sequence ID" value="ABS65583.1"/>
    <property type="molecule type" value="Genomic_DNA"/>
</dbReference>
<dbReference type="SMR" id="A7IC40"/>
<dbReference type="STRING" id="78245.Xaut_0325"/>
<dbReference type="KEGG" id="xau:Xaut_0325"/>
<dbReference type="eggNOG" id="COG1181">
    <property type="taxonomic scope" value="Bacteria"/>
</dbReference>
<dbReference type="HOGENOM" id="CLU_039268_1_1_5"/>
<dbReference type="OrthoDB" id="9813261at2"/>
<dbReference type="PhylomeDB" id="A7IC40"/>
<dbReference type="UniPathway" id="UPA00219"/>
<dbReference type="Proteomes" id="UP000002417">
    <property type="component" value="Chromosome"/>
</dbReference>
<dbReference type="GO" id="GO:0005737">
    <property type="term" value="C:cytoplasm"/>
    <property type="evidence" value="ECO:0007669"/>
    <property type="project" value="UniProtKB-SubCell"/>
</dbReference>
<dbReference type="GO" id="GO:0005524">
    <property type="term" value="F:ATP binding"/>
    <property type="evidence" value="ECO:0007669"/>
    <property type="project" value="UniProtKB-KW"/>
</dbReference>
<dbReference type="GO" id="GO:0008716">
    <property type="term" value="F:D-alanine-D-alanine ligase activity"/>
    <property type="evidence" value="ECO:0007669"/>
    <property type="project" value="UniProtKB-UniRule"/>
</dbReference>
<dbReference type="GO" id="GO:0046872">
    <property type="term" value="F:metal ion binding"/>
    <property type="evidence" value="ECO:0007669"/>
    <property type="project" value="UniProtKB-KW"/>
</dbReference>
<dbReference type="GO" id="GO:0071555">
    <property type="term" value="P:cell wall organization"/>
    <property type="evidence" value="ECO:0007669"/>
    <property type="project" value="UniProtKB-KW"/>
</dbReference>
<dbReference type="GO" id="GO:0009252">
    <property type="term" value="P:peptidoglycan biosynthetic process"/>
    <property type="evidence" value="ECO:0007669"/>
    <property type="project" value="UniProtKB-UniRule"/>
</dbReference>
<dbReference type="GO" id="GO:0008360">
    <property type="term" value="P:regulation of cell shape"/>
    <property type="evidence" value="ECO:0007669"/>
    <property type="project" value="UniProtKB-KW"/>
</dbReference>
<dbReference type="Gene3D" id="3.40.50.20">
    <property type="match status" value="1"/>
</dbReference>
<dbReference type="Gene3D" id="3.30.1490.20">
    <property type="entry name" value="ATP-grasp fold, A domain"/>
    <property type="match status" value="1"/>
</dbReference>
<dbReference type="Gene3D" id="3.30.470.20">
    <property type="entry name" value="ATP-grasp fold, B domain"/>
    <property type="match status" value="1"/>
</dbReference>
<dbReference type="HAMAP" id="MF_00047">
    <property type="entry name" value="Dala_Dala_lig"/>
    <property type="match status" value="1"/>
</dbReference>
<dbReference type="InterPro" id="IPR011761">
    <property type="entry name" value="ATP-grasp"/>
</dbReference>
<dbReference type="InterPro" id="IPR013815">
    <property type="entry name" value="ATP_grasp_subdomain_1"/>
</dbReference>
<dbReference type="InterPro" id="IPR000291">
    <property type="entry name" value="D-Ala_lig_Van_CS"/>
</dbReference>
<dbReference type="InterPro" id="IPR005905">
    <property type="entry name" value="D_ala_D_ala"/>
</dbReference>
<dbReference type="InterPro" id="IPR011095">
    <property type="entry name" value="Dala_Dala_lig_C"/>
</dbReference>
<dbReference type="InterPro" id="IPR011127">
    <property type="entry name" value="Dala_Dala_lig_N"/>
</dbReference>
<dbReference type="InterPro" id="IPR016185">
    <property type="entry name" value="PreATP-grasp_dom_sf"/>
</dbReference>
<dbReference type="NCBIfam" id="TIGR01205">
    <property type="entry name" value="D_ala_D_alaTIGR"/>
    <property type="match status" value="1"/>
</dbReference>
<dbReference type="NCBIfam" id="NF002378">
    <property type="entry name" value="PRK01372.1"/>
    <property type="match status" value="1"/>
</dbReference>
<dbReference type="PANTHER" id="PTHR23132">
    <property type="entry name" value="D-ALANINE--D-ALANINE LIGASE"/>
    <property type="match status" value="1"/>
</dbReference>
<dbReference type="PANTHER" id="PTHR23132:SF23">
    <property type="entry name" value="D-ALANINE--D-ALANINE LIGASE B"/>
    <property type="match status" value="1"/>
</dbReference>
<dbReference type="Pfam" id="PF07478">
    <property type="entry name" value="Dala_Dala_lig_C"/>
    <property type="match status" value="1"/>
</dbReference>
<dbReference type="Pfam" id="PF01820">
    <property type="entry name" value="Dala_Dala_lig_N"/>
    <property type="match status" value="1"/>
</dbReference>
<dbReference type="PIRSF" id="PIRSF039102">
    <property type="entry name" value="Ddl/VanB"/>
    <property type="match status" value="1"/>
</dbReference>
<dbReference type="SUPFAM" id="SSF56059">
    <property type="entry name" value="Glutathione synthetase ATP-binding domain-like"/>
    <property type="match status" value="1"/>
</dbReference>
<dbReference type="SUPFAM" id="SSF52440">
    <property type="entry name" value="PreATP-grasp domain"/>
    <property type="match status" value="1"/>
</dbReference>
<dbReference type="PROSITE" id="PS50975">
    <property type="entry name" value="ATP_GRASP"/>
    <property type="match status" value="1"/>
</dbReference>
<dbReference type="PROSITE" id="PS00843">
    <property type="entry name" value="DALA_DALA_LIGASE_1"/>
    <property type="match status" value="1"/>
</dbReference>
<dbReference type="PROSITE" id="PS00844">
    <property type="entry name" value="DALA_DALA_LIGASE_2"/>
    <property type="match status" value="1"/>
</dbReference>
<comment type="function">
    <text evidence="2">Cell wall formation.</text>
</comment>
<comment type="catalytic activity">
    <reaction evidence="2">
        <text>2 D-alanine + ATP = D-alanyl-D-alanine + ADP + phosphate + H(+)</text>
        <dbReference type="Rhea" id="RHEA:11224"/>
        <dbReference type="ChEBI" id="CHEBI:15378"/>
        <dbReference type="ChEBI" id="CHEBI:30616"/>
        <dbReference type="ChEBI" id="CHEBI:43474"/>
        <dbReference type="ChEBI" id="CHEBI:57416"/>
        <dbReference type="ChEBI" id="CHEBI:57822"/>
        <dbReference type="ChEBI" id="CHEBI:456216"/>
        <dbReference type="EC" id="6.3.2.4"/>
    </reaction>
</comment>
<comment type="cofactor">
    <cofactor evidence="1">
        <name>Mg(2+)</name>
        <dbReference type="ChEBI" id="CHEBI:18420"/>
    </cofactor>
    <cofactor evidence="1">
        <name>Mn(2+)</name>
        <dbReference type="ChEBI" id="CHEBI:29035"/>
    </cofactor>
    <text evidence="1">Binds 2 magnesium or manganese ions per subunit.</text>
</comment>
<comment type="pathway">
    <text evidence="2">Cell wall biogenesis; peptidoglycan biosynthesis.</text>
</comment>
<comment type="subcellular location">
    <subcellularLocation>
        <location evidence="2">Cytoplasm</location>
    </subcellularLocation>
</comment>
<comment type="similarity">
    <text evidence="2">Belongs to the D-alanine--D-alanine ligase family.</text>
</comment>
<sequence length="306" mass="32787">MAKHVAVLMGGWSSEREVSLRSGAACAGALEAAGYRVTRVDVGRDVAEVLTHLKPDVAFNVLHGQPGEDGTIQGILEILRIPYSHSGVLASALAMDKAQARIMLAAAGVPVAKGGLVSRAEAAKAHIMPTPYVLKPNAGGSSVGVFIVREDQAHPPQELTREDWPHGENLLAEEFIPGLELTCAVMGDKVLDVIEIESTQKFYDYESKYAPGGSQHILPARILPEIYQRVQMLSLTAHRALGCRGVSRSDFRFDPSRGDGSGLICLEVNTQPGMTETSLVPELAAHAGISFGELVTWMVEDASLER</sequence>
<feature type="chain" id="PRO_1000091216" description="D-alanine--D-alanine ligase">
    <location>
        <begin position="1"/>
        <end position="306"/>
    </location>
</feature>
<feature type="domain" description="ATP-grasp" evidence="2">
    <location>
        <begin position="101"/>
        <end position="300"/>
    </location>
</feature>
<feature type="binding site" evidence="2">
    <location>
        <begin position="128"/>
        <end position="182"/>
    </location>
    <ligand>
        <name>ATP</name>
        <dbReference type="ChEBI" id="CHEBI:30616"/>
    </ligand>
</feature>
<feature type="binding site" evidence="2">
    <location>
        <position position="250"/>
    </location>
    <ligand>
        <name>Mg(2+)</name>
        <dbReference type="ChEBI" id="CHEBI:18420"/>
        <label>1</label>
    </ligand>
</feature>
<feature type="binding site" evidence="2">
    <location>
        <position position="267"/>
    </location>
    <ligand>
        <name>Mg(2+)</name>
        <dbReference type="ChEBI" id="CHEBI:18420"/>
        <label>1</label>
    </ligand>
</feature>
<feature type="binding site" evidence="2">
    <location>
        <position position="267"/>
    </location>
    <ligand>
        <name>Mg(2+)</name>
        <dbReference type="ChEBI" id="CHEBI:18420"/>
        <label>2</label>
    </ligand>
</feature>
<feature type="binding site" evidence="2">
    <location>
        <position position="269"/>
    </location>
    <ligand>
        <name>Mg(2+)</name>
        <dbReference type="ChEBI" id="CHEBI:18420"/>
        <label>2</label>
    </ligand>
</feature>
<protein>
    <recommendedName>
        <fullName evidence="2">D-alanine--D-alanine ligase</fullName>
        <ecNumber evidence="2">6.3.2.4</ecNumber>
    </recommendedName>
    <alternativeName>
        <fullName evidence="2">D-Ala-D-Ala ligase</fullName>
    </alternativeName>
    <alternativeName>
        <fullName evidence="2">D-alanylalanine synthetase</fullName>
    </alternativeName>
</protein>
<reference key="1">
    <citation type="submission" date="2007-07" db="EMBL/GenBank/DDBJ databases">
        <title>Complete sequence of chromosome of Xanthobacter autotrophicus Py2.</title>
        <authorList>
            <consortium name="US DOE Joint Genome Institute"/>
            <person name="Copeland A."/>
            <person name="Lucas S."/>
            <person name="Lapidus A."/>
            <person name="Barry K."/>
            <person name="Glavina del Rio T."/>
            <person name="Hammon N."/>
            <person name="Israni S."/>
            <person name="Dalin E."/>
            <person name="Tice H."/>
            <person name="Pitluck S."/>
            <person name="Sims D."/>
            <person name="Brettin T."/>
            <person name="Bruce D."/>
            <person name="Detter J.C."/>
            <person name="Han C."/>
            <person name="Tapia R."/>
            <person name="Brainard J."/>
            <person name="Schmutz J."/>
            <person name="Larimer F."/>
            <person name="Land M."/>
            <person name="Hauser L."/>
            <person name="Kyrpides N."/>
            <person name="Kim E."/>
            <person name="Ensigns S.A."/>
            <person name="Richardson P."/>
        </authorList>
    </citation>
    <scope>NUCLEOTIDE SEQUENCE [LARGE SCALE GENOMIC DNA]</scope>
    <source>
        <strain>ATCC BAA-1158 / Py2</strain>
    </source>
</reference>
<organism>
    <name type="scientific">Xanthobacter autotrophicus (strain ATCC BAA-1158 / Py2)</name>
    <dbReference type="NCBI Taxonomy" id="78245"/>
    <lineage>
        <taxon>Bacteria</taxon>
        <taxon>Pseudomonadati</taxon>
        <taxon>Pseudomonadota</taxon>
        <taxon>Alphaproteobacteria</taxon>
        <taxon>Hyphomicrobiales</taxon>
        <taxon>Xanthobacteraceae</taxon>
        <taxon>Xanthobacter</taxon>
    </lineage>
</organism>
<name>DDL_XANP2</name>
<proteinExistence type="inferred from homology"/>
<evidence type="ECO:0000250" key="1"/>
<evidence type="ECO:0000255" key="2">
    <source>
        <dbReference type="HAMAP-Rule" id="MF_00047"/>
    </source>
</evidence>
<gene>
    <name evidence="2" type="primary">ddl</name>
    <name type="ordered locus">Xaut_0325</name>
</gene>
<keyword id="KW-0067">ATP-binding</keyword>
<keyword id="KW-0133">Cell shape</keyword>
<keyword id="KW-0961">Cell wall biogenesis/degradation</keyword>
<keyword id="KW-0963">Cytoplasm</keyword>
<keyword id="KW-0436">Ligase</keyword>
<keyword id="KW-0460">Magnesium</keyword>
<keyword id="KW-0464">Manganese</keyword>
<keyword id="KW-0479">Metal-binding</keyword>
<keyword id="KW-0547">Nucleotide-binding</keyword>
<keyword id="KW-0573">Peptidoglycan synthesis</keyword>
<keyword id="KW-1185">Reference proteome</keyword>
<accession>A7IC40</accession>